<feature type="chain" id="PRO_0000266612" description="Large ribosomal subunit protein uL14">
    <location>
        <begin position="1"/>
        <end position="141"/>
    </location>
</feature>
<organism>
    <name type="scientific">Pyrococcus furiosus (strain ATCC 43587 / DSM 3638 / JCM 8422 / Vc1)</name>
    <dbReference type="NCBI Taxonomy" id="186497"/>
    <lineage>
        <taxon>Archaea</taxon>
        <taxon>Methanobacteriati</taxon>
        <taxon>Methanobacteriota</taxon>
        <taxon>Thermococci</taxon>
        <taxon>Thermococcales</taxon>
        <taxon>Thermococcaceae</taxon>
        <taxon>Pyrococcus</taxon>
    </lineage>
</organism>
<evidence type="ECO:0000255" key="1">
    <source>
        <dbReference type="HAMAP-Rule" id="MF_01367"/>
    </source>
</evidence>
<evidence type="ECO:0000269" key="2">
    <source>
    </source>
</evidence>
<evidence type="ECO:0007744" key="3">
    <source>
        <dbReference type="PDB" id="4V6U"/>
    </source>
</evidence>
<sequence>MAKKGAGATRGVSAVRPTRALPVGAYLTVADNSGAKVIQIIGVVEYHGTRRRLASAGVGDMVVATVKKGRPDMRHQVVRAVIIRQRKEYRRLDGMRVKFEDNAAVIVTPEGVPRGTEIRGPVAREAAERWVRIGSIASIIV</sequence>
<proteinExistence type="evidence at protein level"/>
<name>RL14_PYRFU</name>
<reference key="1">
    <citation type="journal article" date="1999" name="Genetics">
        <title>Divergence of the hyperthermophilic archaea Pyrococcus furiosus and P. horikoshii inferred from complete genomic sequences.</title>
        <authorList>
            <person name="Maeder D.L."/>
            <person name="Weiss R.B."/>
            <person name="Dunn D.M."/>
            <person name="Cherry J.L."/>
            <person name="Gonzalez J.M."/>
            <person name="DiRuggiero J."/>
            <person name="Robb F.T."/>
        </authorList>
    </citation>
    <scope>NUCLEOTIDE SEQUENCE [LARGE SCALE GENOMIC DNA]</scope>
    <source>
        <strain>ATCC 43587 / DSM 3638 / JCM 8422 / Vc1</strain>
    </source>
</reference>
<reference evidence="3" key="2">
    <citation type="journal article" date="2013" name="Nucleic Acids Res.">
        <title>Promiscuous behaviour of archaeal ribosomal proteins: implications for eukaryotic ribosome evolution.</title>
        <authorList>
            <person name="Armache J.P."/>
            <person name="Anger A.M."/>
            <person name="Marquez V."/>
            <person name="Franckenberg S."/>
            <person name="Frohlich T."/>
            <person name="Villa E."/>
            <person name="Berninghausen O."/>
            <person name="Thomm M."/>
            <person name="Arnold G.J."/>
            <person name="Beckmann R."/>
            <person name="Wilson D.N."/>
        </authorList>
    </citation>
    <scope>STRUCTURE BY ELECTRON MICROSCOPY (6.60 ANGSTROMS) IN THE 70S RIBOSOME</scope>
    <scope>SUBUNIT</scope>
</reference>
<accession>Q8U009</accession>
<protein>
    <recommendedName>
        <fullName evidence="1">Large ribosomal subunit protein uL14</fullName>
    </recommendedName>
    <alternativeName>
        <fullName>50S ribosomal protein L14</fullName>
    </alternativeName>
</protein>
<comment type="function">
    <text evidence="1">Binds to 23S rRNA. Forms part of two intersubunit bridges in the 70S ribosome.</text>
</comment>
<comment type="subunit">
    <text evidence="1 2">Part of the 50S ribosomal subunit (PubMed:23222135). Forms a cluster with proteins L3 and L24e, part of which may contact the 16S rRNA in 2 intersubunit bridges.</text>
</comment>
<comment type="similarity">
    <text evidence="1">Belongs to the universal ribosomal protein uL14 family.</text>
</comment>
<dbReference type="EMBL" id="AE009950">
    <property type="protein sequence ID" value="AAL81938.1"/>
    <property type="molecule type" value="Genomic_DNA"/>
</dbReference>
<dbReference type="RefSeq" id="WP_011012955.1">
    <property type="nucleotide sequence ID" value="NZ_CP023154.1"/>
</dbReference>
<dbReference type="PDB" id="4V6U">
    <property type="method" value="EM"/>
    <property type="resolution" value="6.60 A"/>
    <property type="chains" value="BJ=1-141"/>
</dbReference>
<dbReference type="PDBsum" id="4V6U"/>
<dbReference type="SMR" id="Q8U009"/>
<dbReference type="STRING" id="186497.PF1814"/>
<dbReference type="PaxDb" id="186497-PF1814"/>
<dbReference type="KEGG" id="pfu:PF1814"/>
<dbReference type="PATRIC" id="fig|186497.12.peg.1885"/>
<dbReference type="eggNOG" id="arCOG04095">
    <property type="taxonomic scope" value="Archaea"/>
</dbReference>
<dbReference type="HOGENOM" id="CLU_095071_3_0_2"/>
<dbReference type="OrthoDB" id="23569at2157"/>
<dbReference type="PhylomeDB" id="Q8U009"/>
<dbReference type="Proteomes" id="UP000001013">
    <property type="component" value="Chromosome"/>
</dbReference>
<dbReference type="GO" id="GO:0022625">
    <property type="term" value="C:cytosolic large ribosomal subunit"/>
    <property type="evidence" value="ECO:0007669"/>
    <property type="project" value="TreeGrafter"/>
</dbReference>
<dbReference type="GO" id="GO:0070180">
    <property type="term" value="F:large ribosomal subunit rRNA binding"/>
    <property type="evidence" value="ECO:0007669"/>
    <property type="project" value="TreeGrafter"/>
</dbReference>
<dbReference type="GO" id="GO:0003735">
    <property type="term" value="F:structural constituent of ribosome"/>
    <property type="evidence" value="ECO:0007669"/>
    <property type="project" value="InterPro"/>
</dbReference>
<dbReference type="GO" id="GO:0006412">
    <property type="term" value="P:translation"/>
    <property type="evidence" value="ECO:0007669"/>
    <property type="project" value="UniProtKB-UniRule"/>
</dbReference>
<dbReference type="CDD" id="cd00337">
    <property type="entry name" value="Ribosomal_uL14"/>
    <property type="match status" value="1"/>
</dbReference>
<dbReference type="FunFam" id="2.40.150.20:FF:000007">
    <property type="entry name" value="50S ribosomal protein L14"/>
    <property type="match status" value="1"/>
</dbReference>
<dbReference type="Gene3D" id="2.40.150.20">
    <property type="entry name" value="Ribosomal protein L14"/>
    <property type="match status" value="1"/>
</dbReference>
<dbReference type="HAMAP" id="MF_01367">
    <property type="entry name" value="Ribosomal_uL14"/>
    <property type="match status" value="1"/>
</dbReference>
<dbReference type="InterPro" id="IPR000218">
    <property type="entry name" value="Ribosomal_uL14"/>
</dbReference>
<dbReference type="InterPro" id="IPR019971">
    <property type="entry name" value="Ribosomal_uL14_arc"/>
</dbReference>
<dbReference type="InterPro" id="IPR019972">
    <property type="entry name" value="Ribosomal_uL14_CS"/>
</dbReference>
<dbReference type="InterPro" id="IPR036853">
    <property type="entry name" value="Ribosomal_uL14_sf"/>
</dbReference>
<dbReference type="NCBIfam" id="NF006344">
    <property type="entry name" value="PRK08571.1"/>
    <property type="match status" value="1"/>
</dbReference>
<dbReference type="NCBIfam" id="TIGR03673">
    <property type="entry name" value="uL14_arch"/>
    <property type="match status" value="1"/>
</dbReference>
<dbReference type="PANTHER" id="PTHR11761">
    <property type="entry name" value="50S/60S RIBOSOMAL PROTEIN L14/L23"/>
    <property type="match status" value="1"/>
</dbReference>
<dbReference type="PANTHER" id="PTHR11761:SF8">
    <property type="entry name" value="LARGE RIBOSOMAL SUBUNIT PROTEIN UL14"/>
    <property type="match status" value="1"/>
</dbReference>
<dbReference type="Pfam" id="PF00238">
    <property type="entry name" value="Ribosomal_L14"/>
    <property type="match status" value="1"/>
</dbReference>
<dbReference type="SMART" id="SM01374">
    <property type="entry name" value="Ribosomal_L14"/>
    <property type="match status" value="1"/>
</dbReference>
<dbReference type="SUPFAM" id="SSF50193">
    <property type="entry name" value="Ribosomal protein L14"/>
    <property type="match status" value="1"/>
</dbReference>
<dbReference type="PROSITE" id="PS00049">
    <property type="entry name" value="RIBOSOMAL_L14"/>
    <property type="match status" value="1"/>
</dbReference>
<keyword id="KW-0002">3D-structure</keyword>
<keyword id="KW-1185">Reference proteome</keyword>
<keyword id="KW-0687">Ribonucleoprotein</keyword>
<keyword id="KW-0689">Ribosomal protein</keyword>
<keyword id="KW-0694">RNA-binding</keyword>
<keyword id="KW-0699">rRNA-binding</keyword>
<gene>
    <name evidence="1" type="primary">rpl14</name>
    <name type="ordered locus">PF1814</name>
</gene>